<sequence length="157" mass="17743">MSQVILDLQIACADSQGLPTEGDFQRWLEAVLPLFQPVSEVTIRLVDEAESHDLNLTYRGKDKSTNVLSFPFEAPPEIELPLLGDLIICRQVVEKEAIEQEKALLAHWAHMVVHGSLHLLGYDHIDDDEAEEMELIEIEIMHGLGYPDPYISEKDPD</sequence>
<gene>
    <name evidence="1" type="primary">ybeY</name>
    <name type="ordered locus">YPK_3007</name>
</gene>
<comment type="function">
    <text evidence="1">Single strand-specific metallo-endoribonuclease involved in late-stage 70S ribosome quality control and in maturation of the 3' terminus of the 16S rRNA.</text>
</comment>
<comment type="cofactor">
    <cofactor evidence="1">
        <name>Zn(2+)</name>
        <dbReference type="ChEBI" id="CHEBI:29105"/>
    </cofactor>
    <text evidence="1">Binds 1 zinc ion.</text>
</comment>
<comment type="subcellular location">
    <subcellularLocation>
        <location evidence="1">Cytoplasm</location>
    </subcellularLocation>
</comment>
<comment type="similarity">
    <text evidence="1">Belongs to the endoribonuclease YbeY family.</text>
</comment>
<accession>B1JG97</accession>
<keyword id="KW-0963">Cytoplasm</keyword>
<keyword id="KW-0255">Endonuclease</keyword>
<keyword id="KW-0378">Hydrolase</keyword>
<keyword id="KW-0479">Metal-binding</keyword>
<keyword id="KW-0540">Nuclease</keyword>
<keyword id="KW-0690">Ribosome biogenesis</keyword>
<keyword id="KW-0698">rRNA processing</keyword>
<keyword id="KW-0862">Zinc</keyword>
<dbReference type="EC" id="3.1.-.-" evidence="1"/>
<dbReference type="EMBL" id="CP000950">
    <property type="protein sequence ID" value="ACA69280.1"/>
    <property type="molecule type" value="Genomic_DNA"/>
</dbReference>
<dbReference type="RefSeq" id="WP_012304389.1">
    <property type="nucleotide sequence ID" value="NZ_CP009792.1"/>
</dbReference>
<dbReference type="SMR" id="B1JG97"/>
<dbReference type="KEGG" id="ypy:YPK_3007"/>
<dbReference type="PATRIC" id="fig|502800.11.peg.3727"/>
<dbReference type="GO" id="GO:0005737">
    <property type="term" value="C:cytoplasm"/>
    <property type="evidence" value="ECO:0007669"/>
    <property type="project" value="UniProtKB-SubCell"/>
</dbReference>
<dbReference type="GO" id="GO:0004222">
    <property type="term" value="F:metalloendopeptidase activity"/>
    <property type="evidence" value="ECO:0007669"/>
    <property type="project" value="InterPro"/>
</dbReference>
<dbReference type="GO" id="GO:0004521">
    <property type="term" value="F:RNA endonuclease activity"/>
    <property type="evidence" value="ECO:0007669"/>
    <property type="project" value="UniProtKB-UniRule"/>
</dbReference>
<dbReference type="GO" id="GO:0008270">
    <property type="term" value="F:zinc ion binding"/>
    <property type="evidence" value="ECO:0007669"/>
    <property type="project" value="UniProtKB-UniRule"/>
</dbReference>
<dbReference type="GO" id="GO:0006364">
    <property type="term" value="P:rRNA processing"/>
    <property type="evidence" value="ECO:0007669"/>
    <property type="project" value="UniProtKB-UniRule"/>
</dbReference>
<dbReference type="Gene3D" id="3.40.390.30">
    <property type="entry name" value="Metalloproteases ('zincins'), catalytic domain"/>
    <property type="match status" value="1"/>
</dbReference>
<dbReference type="HAMAP" id="MF_00009">
    <property type="entry name" value="Endoribonucl_YbeY"/>
    <property type="match status" value="1"/>
</dbReference>
<dbReference type="InterPro" id="IPR023091">
    <property type="entry name" value="MetalPrtase_cat_dom_sf_prd"/>
</dbReference>
<dbReference type="InterPro" id="IPR002036">
    <property type="entry name" value="YbeY"/>
</dbReference>
<dbReference type="InterPro" id="IPR020549">
    <property type="entry name" value="YbeY_CS"/>
</dbReference>
<dbReference type="NCBIfam" id="TIGR00043">
    <property type="entry name" value="rRNA maturation RNase YbeY"/>
    <property type="match status" value="1"/>
</dbReference>
<dbReference type="PANTHER" id="PTHR46986">
    <property type="entry name" value="ENDORIBONUCLEASE YBEY, CHLOROPLASTIC"/>
    <property type="match status" value="1"/>
</dbReference>
<dbReference type="PANTHER" id="PTHR46986:SF1">
    <property type="entry name" value="ENDORIBONUCLEASE YBEY, CHLOROPLASTIC"/>
    <property type="match status" value="1"/>
</dbReference>
<dbReference type="Pfam" id="PF02130">
    <property type="entry name" value="YbeY"/>
    <property type="match status" value="1"/>
</dbReference>
<dbReference type="SUPFAM" id="SSF55486">
    <property type="entry name" value="Metalloproteases ('zincins'), catalytic domain"/>
    <property type="match status" value="1"/>
</dbReference>
<dbReference type="PROSITE" id="PS01306">
    <property type="entry name" value="UPF0054"/>
    <property type="match status" value="1"/>
</dbReference>
<feature type="chain" id="PRO_1000089233" description="Endoribonuclease YbeY">
    <location>
        <begin position="1"/>
        <end position="157"/>
    </location>
</feature>
<feature type="binding site" evidence="1">
    <location>
        <position position="114"/>
    </location>
    <ligand>
        <name>Zn(2+)</name>
        <dbReference type="ChEBI" id="CHEBI:29105"/>
        <note>catalytic</note>
    </ligand>
</feature>
<feature type="binding site" evidence="1">
    <location>
        <position position="118"/>
    </location>
    <ligand>
        <name>Zn(2+)</name>
        <dbReference type="ChEBI" id="CHEBI:29105"/>
        <note>catalytic</note>
    </ligand>
</feature>
<feature type="binding site" evidence="1">
    <location>
        <position position="124"/>
    </location>
    <ligand>
        <name>Zn(2+)</name>
        <dbReference type="ChEBI" id="CHEBI:29105"/>
        <note>catalytic</note>
    </ligand>
</feature>
<name>YBEY_YERPY</name>
<evidence type="ECO:0000255" key="1">
    <source>
        <dbReference type="HAMAP-Rule" id="MF_00009"/>
    </source>
</evidence>
<proteinExistence type="inferred from homology"/>
<protein>
    <recommendedName>
        <fullName evidence="1">Endoribonuclease YbeY</fullName>
        <ecNumber evidence="1">3.1.-.-</ecNumber>
    </recommendedName>
</protein>
<reference key="1">
    <citation type="submission" date="2008-02" db="EMBL/GenBank/DDBJ databases">
        <title>Complete sequence of Yersinia pseudotuberculosis YPIII.</title>
        <authorList>
            <consortium name="US DOE Joint Genome Institute"/>
            <person name="Copeland A."/>
            <person name="Lucas S."/>
            <person name="Lapidus A."/>
            <person name="Glavina del Rio T."/>
            <person name="Dalin E."/>
            <person name="Tice H."/>
            <person name="Bruce D."/>
            <person name="Goodwin L."/>
            <person name="Pitluck S."/>
            <person name="Munk A.C."/>
            <person name="Brettin T."/>
            <person name="Detter J.C."/>
            <person name="Han C."/>
            <person name="Tapia R."/>
            <person name="Schmutz J."/>
            <person name="Larimer F."/>
            <person name="Land M."/>
            <person name="Hauser L."/>
            <person name="Challacombe J.F."/>
            <person name="Green L."/>
            <person name="Lindler L.E."/>
            <person name="Nikolich M.P."/>
            <person name="Richardson P."/>
        </authorList>
    </citation>
    <scope>NUCLEOTIDE SEQUENCE [LARGE SCALE GENOMIC DNA]</scope>
    <source>
        <strain>YPIII</strain>
    </source>
</reference>
<organism>
    <name type="scientific">Yersinia pseudotuberculosis serotype O:3 (strain YPIII)</name>
    <dbReference type="NCBI Taxonomy" id="502800"/>
    <lineage>
        <taxon>Bacteria</taxon>
        <taxon>Pseudomonadati</taxon>
        <taxon>Pseudomonadota</taxon>
        <taxon>Gammaproteobacteria</taxon>
        <taxon>Enterobacterales</taxon>
        <taxon>Yersiniaceae</taxon>
        <taxon>Yersinia</taxon>
    </lineage>
</organism>